<sequence>MSTHVTFDYSKALSFISEHELTYLRDAVKVSHHAIHEKTGAGNDFLGWVDLPLAYDKEEFIRIQKCAEKIKNDSDILLVIGIGGSYLGARAAIEMLNHSFYNMLSKEQRKTPQVLFVGQNISSTYMKDLMDVLEGKDFSINVISKSGTTTEPAIAFRLFRKLLEDKYGKEEARKRIYATTDKARGALKTLADEEGYETFVIPDDVGGRFSVLTPVGLLPIAVSGLSIEEMMQGAAAGCNDFAKSELEENPAYQYAVVRNALYNKGKTIEMLVNYEPALQYFAEWWKQLFGESEGKDQKGIFPSSANFSTDLHSLGQYIQEGRRDLFETVLKVGKPTHELTIELDESDLDGLNYLAGKTVDFVNTKAYEGTLLAHSDGGVPNLIVNIPELNEYTFGYLVYFFEKACAMSGYLLGVNPFDQPGVEAYKKNMFALLGKPGFEELKAELEERLK</sequence>
<accession>A7GUA6</accession>
<dbReference type="EC" id="5.3.1.9" evidence="1"/>
<dbReference type="EMBL" id="CP000764">
    <property type="protein sequence ID" value="ABS23714.1"/>
    <property type="molecule type" value="Genomic_DNA"/>
</dbReference>
<dbReference type="RefSeq" id="WP_012095965.1">
    <property type="nucleotide sequence ID" value="NC_009674.1"/>
</dbReference>
<dbReference type="SMR" id="A7GUA6"/>
<dbReference type="STRING" id="315749.Bcer98_3509"/>
<dbReference type="GeneID" id="33898765"/>
<dbReference type="KEGG" id="bcy:Bcer98_3509"/>
<dbReference type="eggNOG" id="COG0166">
    <property type="taxonomic scope" value="Bacteria"/>
</dbReference>
<dbReference type="HOGENOM" id="CLU_037303_0_1_9"/>
<dbReference type="OrthoDB" id="140919at2"/>
<dbReference type="UniPathway" id="UPA00109">
    <property type="reaction ID" value="UER00181"/>
</dbReference>
<dbReference type="UniPathway" id="UPA00138"/>
<dbReference type="Proteomes" id="UP000002300">
    <property type="component" value="Chromosome"/>
</dbReference>
<dbReference type="GO" id="GO:0005829">
    <property type="term" value="C:cytosol"/>
    <property type="evidence" value="ECO:0007669"/>
    <property type="project" value="TreeGrafter"/>
</dbReference>
<dbReference type="GO" id="GO:0097367">
    <property type="term" value="F:carbohydrate derivative binding"/>
    <property type="evidence" value="ECO:0007669"/>
    <property type="project" value="InterPro"/>
</dbReference>
<dbReference type="GO" id="GO:0004347">
    <property type="term" value="F:glucose-6-phosphate isomerase activity"/>
    <property type="evidence" value="ECO:0007669"/>
    <property type="project" value="UniProtKB-UniRule"/>
</dbReference>
<dbReference type="GO" id="GO:0048029">
    <property type="term" value="F:monosaccharide binding"/>
    <property type="evidence" value="ECO:0007669"/>
    <property type="project" value="TreeGrafter"/>
</dbReference>
<dbReference type="GO" id="GO:0006094">
    <property type="term" value="P:gluconeogenesis"/>
    <property type="evidence" value="ECO:0007669"/>
    <property type="project" value="UniProtKB-UniRule"/>
</dbReference>
<dbReference type="GO" id="GO:0051156">
    <property type="term" value="P:glucose 6-phosphate metabolic process"/>
    <property type="evidence" value="ECO:0007669"/>
    <property type="project" value="TreeGrafter"/>
</dbReference>
<dbReference type="GO" id="GO:0006096">
    <property type="term" value="P:glycolytic process"/>
    <property type="evidence" value="ECO:0007669"/>
    <property type="project" value="UniProtKB-UniRule"/>
</dbReference>
<dbReference type="CDD" id="cd05015">
    <property type="entry name" value="SIS_PGI_1"/>
    <property type="match status" value="1"/>
</dbReference>
<dbReference type="CDD" id="cd05016">
    <property type="entry name" value="SIS_PGI_2"/>
    <property type="match status" value="1"/>
</dbReference>
<dbReference type="FunFam" id="3.40.50.10490:FF:000015">
    <property type="entry name" value="Glucose-6-phosphate isomerase"/>
    <property type="match status" value="1"/>
</dbReference>
<dbReference type="FunFam" id="3.40.50.10490:FF:000016">
    <property type="entry name" value="Glucose-6-phosphate isomerase"/>
    <property type="match status" value="1"/>
</dbReference>
<dbReference type="FunFam" id="3.40.50.10490:FF:000020">
    <property type="entry name" value="Glucose-6-phosphate isomerase"/>
    <property type="match status" value="1"/>
</dbReference>
<dbReference type="Gene3D" id="3.40.50.10490">
    <property type="entry name" value="Glucose-6-phosphate isomerase like protein, domain 1"/>
    <property type="match status" value="3"/>
</dbReference>
<dbReference type="HAMAP" id="MF_00473">
    <property type="entry name" value="G6P_isomerase"/>
    <property type="match status" value="1"/>
</dbReference>
<dbReference type="InterPro" id="IPR001672">
    <property type="entry name" value="G6P_Isomerase"/>
</dbReference>
<dbReference type="InterPro" id="IPR018189">
    <property type="entry name" value="Phosphoglucose_isomerase_CS"/>
</dbReference>
<dbReference type="InterPro" id="IPR046348">
    <property type="entry name" value="SIS_dom_sf"/>
</dbReference>
<dbReference type="InterPro" id="IPR035476">
    <property type="entry name" value="SIS_PGI_1"/>
</dbReference>
<dbReference type="InterPro" id="IPR035482">
    <property type="entry name" value="SIS_PGI_2"/>
</dbReference>
<dbReference type="NCBIfam" id="NF010697">
    <property type="entry name" value="PRK14097.1"/>
    <property type="match status" value="1"/>
</dbReference>
<dbReference type="PANTHER" id="PTHR11469">
    <property type="entry name" value="GLUCOSE-6-PHOSPHATE ISOMERASE"/>
    <property type="match status" value="1"/>
</dbReference>
<dbReference type="PANTHER" id="PTHR11469:SF1">
    <property type="entry name" value="GLUCOSE-6-PHOSPHATE ISOMERASE"/>
    <property type="match status" value="1"/>
</dbReference>
<dbReference type="Pfam" id="PF00342">
    <property type="entry name" value="PGI"/>
    <property type="match status" value="1"/>
</dbReference>
<dbReference type="PRINTS" id="PR00662">
    <property type="entry name" value="G6PISOMERASE"/>
</dbReference>
<dbReference type="SUPFAM" id="SSF53697">
    <property type="entry name" value="SIS domain"/>
    <property type="match status" value="1"/>
</dbReference>
<dbReference type="PROSITE" id="PS00765">
    <property type="entry name" value="P_GLUCOSE_ISOMERASE_1"/>
    <property type="match status" value="1"/>
</dbReference>
<dbReference type="PROSITE" id="PS00174">
    <property type="entry name" value="P_GLUCOSE_ISOMERASE_2"/>
    <property type="match status" value="1"/>
</dbReference>
<dbReference type="PROSITE" id="PS51463">
    <property type="entry name" value="P_GLUCOSE_ISOMERASE_3"/>
    <property type="match status" value="1"/>
</dbReference>
<keyword id="KW-0963">Cytoplasm</keyword>
<keyword id="KW-0312">Gluconeogenesis</keyword>
<keyword id="KW-0324">Glycolysis</keyword>
<keyword id="KW-0413">Isomerase</keyword>
<keyword id="KW-0597">Phosphoprotein</keyword>
<comment type="function">
    <text evidence="1">Catalyzes the reversible isomerization of glucose-6-phosphate to fructose-6-phosphate.</text>
</comment>
<comment type="catalytic activity">
    <reaction evidence="1">
        <text>alpha-D-glucose 6-phosphate = beta-D-fructose 6-phosphate</text>
        <dbReference type="Rhea" id="RHEA:11816"/>
        <dbReference type="ChEBI" id="CHEBI:57634"/>
        <dbReference type="ChEBI" id="CHEBI:58225"/>
        <dbReference type="EC" id="5.3.1.9"/>
    </reaction>
</comment>
<comment type="pathway">
    <text evidence="1">Carbohydrate biosynthesis; gluconeogenesis.</text>
</comment>
<comment type="pathway">
    <text evidence="1">Carbohydrate degradation; glycolysis; D-glyceraldehyde 3-phosphate and glycerone phosphate from D-glucose: step 2/4.</text>
</comment>
<comment type="subcellular location">
    <subcellularLocation>
        <location evidence="1">Cytoplasm</location>
    </subcellularLocation>
</comment>
<comment type="similarity">
    <text evidence="1">Belongs to the GPI family.</text>
</comment>
<evidence type="ECO:0000255" key="1">
    <source>
        <dbReference type="HAMAP-Rule" id="MF_00473"/>
    </source>
</evidence>
<organism>
    <name type="scientific">Bacillus cytotoxicus (strain DSM 22905 / CIP 110041 / 391-98 / NVH 391-98)</name>
    <dbReference type="NCBI Taxonomy" id="315749"/>
    <lineage>
        <taxon>Bacteria</taxon>
        <taxon>Bacillati</taxon>
        <taxon>Bacillota</taxon>
        <taxon>Bacilli</taxon>
        <taxon>Bacillales</taxon>
        <taxon>Bacillaceae</taxon>
        <taxon>Bacillus</taxon>
        <taxon>Bacillus cereus group</taxon>
    </lineage>
</organism>
<reference key="1">
    <citation type="journal article" date="2008" name="Chem. Biol. Interact.">
        <title>Extending the Bacillus cereus group genomics to putative food-borne pathogens of different toxicity.</title>
        <authorList>
            <person name="Lapidus A."/>
            <person name="Goltsman E."/>
            <person name="Auger S."/>
            <person name="Galleron N."/>
            <person name="Segurens B."/>
            <person name="Dossat C."/>
            <person name="Land M.L."/>
            <person name="Broussolle V."/>
            <person name="Brillard J."/>
            <person name="Guinebretiere M.-H."/>
            <person name="Sanchis V."/>
            <person name="Nguen-the C."/>
            <person name="Lereclus D."/>
            <person name="Richardson P."/>
            <person name="Wincker P."/>
            <person name="Weissenbach J."/>
            <person name="Ehrlich S.D."/>
            <person name="Sorokin A."/>
        </authorList>
    </citation>
    <scope>NUCLEOTIDE SEQUENCE [LARGE SCALE GENOMIC DNA]</scope>
    <source>
        <strain>DSM 22905 / CIP 110041 / 391-98 / NVH 391-98</strain>
    </source>
</reference>
<feature type="chain" id="PRO_1000081230" description="Glucose-6-phosphate isomerase">
    <location>
        <begin position="1"/>
        <end position="450"/>
    </location>
</feature>
<feature type="active site" description="Proton donor" evidence="1">
    <location>
        <position position="291"/>
    </location>
</feature>
<feature type="active site" evidence="1">
    <location>
        <position position="312"/>
    </location>
</feature>
<feature type="active site" evidence="1">
    <location>
        <position position="426"/>
    </location>
</feature>
<feature type="modified residue" description="Phosphothreonine" evidence="1">
    <location>
        <position position="39"/>
    </location>
</feature>
<protein>
    <recommendedName>
        <fullName evidence="1">Glucose-6-phosphate isomerase</fullName>
        <shortName evidence="1">GPI</shortName>
        <ecNumber evidence="1">5.3.1.9</ecNumber>
    </recommendedName>
    <alternativeName>
        <fullName evidence="1">Phosphoglucose isomerase</fullName>
        <shortName evidence="1">PGI</shortName>
    </alternativeName>
    <alternativeName>
        <fullName evidence="1">Phosphohexose isomerase</fullName>
        <shortName evidence="1">PHI</shortName>
    </alternativeName>
</protein>
<name>G6PI_BACCN</name>
<gene>
    <name evidence="1" type="primary">pgi</name>
    <name type="ordered locus">Bcer98_3509</name>
</gene>
<proteinExistence type="inferred from homology"/>